<comment type="function">
    <text evidence="1">Involved in allosteric regulation of aspartate carbamoyltransferase.</text>
</comment>
<comment type="cofactor">
    <cofactor evidence="1">
        <name>Zn(2+)</name>
        <dbReference type="ChEBI" id="CHEBI:29105"/>
    </cofactor>
    <text evidence="1">Binds 1 zinc ion per subunit.</text>
</comment>
<comment type="subunit">
    <text evidence="1">Contains catalytic and regulatory chains.</text>
</comment>
<comment type="similarity">
    <text evidence="1">Belongs to the PyrI family.</text>
</comment>
<reference key="1">
    <citation type="submission" date="2007-09" db="EMBL/GenBank/DDBJ databases">
        <title>Complete sequence of chromosome of Serratia proteamaculans 568.</title>
        <authorList>
            <consortium name="US DOE Joint Genome Institute"/>
            <person name="Copeland A."/>
            <person name="Lucas S."/>
            <person name="Lapidus A."/>
            <person name="Barry K."/>
            <person name="Glavina del Rio T."/>
            <person name="Dalin E."/>
            <person name="Tice H."/>
            <person name="Pitluck S."/>
            <person name="Chain P."/>
            <person name="Malfatti S."/>
            <person name="Shin M."/>
            <person name="Vergez L."/>
            <person name="Schmutz J."/>
            <person name="Larimer F."/>
            <person name="Land M."/>
            <person name="Hauser L."/>
            <person name="Kyrpides N."/>
            <person name="Kim E."/>
            <person name="Taghavi S."/>
            <person name="Newman L."/>
            <person name="Vangronsveld J."/>
            <person name="van der Lelie D."/>
            <person name="Richardson P."/>
        </authorList>
    </citation>
    <scope>NUCLEOTIDE SEQUENCE [LARGE SCALE GENOMIC DNA]</scope>
    <source>
        <strain>568</strain>
    </source>
</reference>
<keyword id="KW-0479">Metal-binding</keyword>
<keyword id="KW-0665">Pyrimidine biosynthesis</keyword>
<keyword id="KW-0862">Zinc</keyword>
<dbReference type="EMBL" id="CP000826">
    <property type="protein sequence ID" value="ABV39650.1"/>
    <property type="molecule type" value="Genomic_DNA"/>
</dbReference>
<dbReference type="SMR" id="A8G960"/>
<dbReference type="STRING" id="399741.Spro_0544"/>
<dbReference type="KEGG" id="spe:Spro_0544"/>
<dbReference type="eggNOG" id="COG1781">
    <property type="taxonomic scope" value="Bacteria"/>
</dbReference>
<dbReference type="HOGENOM" id="CLU_128576_0_0_6"/>
<dbReference type="OrthoDB" id="5599321at2"/>
<dbReference type="GO" id="GO:0009347">
    <property type="term" value="C:aspartate carbamoyltransferase complex"/>
    <property type="evidence" value="ECO:0007669"/>
    <property type="project" value="InterPro"/>
</dbReference>
<dbReference type="GO" id="GO:0046872">
    <property type="term" value="F:metal ion binding"/>
    <property type="evidence" value="ECO:0007669"/>
    <property type="project" value="UniProtKB-KW"/>
</dbReference>
<dbReference type="GO" id="GO:0006207">
    <property type="term" value="P:'de novo' pyrimidine nucleobase biosynthetic process"/>
    <property type="evidence" value="ECO:0007669"/>
    <property type="project" value="InterPro"/>
</dbReference>
<dbReference type="GO" id="GO:0006221">
    <property type="term" value="P:pyrimidine nucleotide biosynthetic process"/>
    <property type="evidence" value="ECO:0007669"/>
    <property type="project" value="UniProtKB-UniRule"/>
</dbReference>
<dbReference type="FunFam" id="3.30.70.140:FF:000001">
    <property type="entry name" value="Aspartate carbamoyltransferase regulatory chain"/>
    <property type="match status" value="1"/>
</dbReference>
<dbReference type="Gene3D" id="2.30.30.20">
    <property type="entry name" value="Aspartate carbamoyltransferase regulatory subunit, C-terminal domain"/>
    <property type="match status" value="1"/>
</dbReference>
<dbReference type="Gene3D" id="3.30.70.140">
    <property type="entry name" value="Aspartate carbamoyltransferase regulatory subunit, N-terminal domain"/>
    <property type="match status" value="1"/>
</dbReference>
<dbReference type="HAMAP" id="MF_00002">
    <property type="entry name" value="Asp_carb_tr_reg"/>
    <property type="match status" value="1"/>
</dbReference>
<dbReference type="InterPro" id="IPR020545">
    <property type="entry name" value="Asp_carbamoyltransf_reg_N"/>
</dbReference>
<dbReference type="InterPro" id="IPR002801">
    <property type="entry name" value="Asp_carbamoylTrfase_reg"/>
</dbReference>
<dbReference type="InterPro" id="IPR020542">
    <property type="entry name" value="Asp_carbamoyltrfase_reg_C"/>
</dbReference>
<dbReference type="InterPro" id="IPR036792">
    <property type="entry name" value="Asp_carbatrfase_reg_C_sf"/>
</dbReference>
<dbReference type="InterPro" id="IPR036793">
    <property type="entry name" value="Asp_carbatrfase_reg_N_sf"/>
</dbReference>
<dbReference type="NCBIfam" id="TIGR00240">
    <property type="entry name" value="ATCase_reg"/>
    <property type="match status" value="1"/>
</dbReference>
<dbReference type="PANTHER" id="PTHR35805">
    <property type="entry name" value="ASPARTATE CARBAMOYLTRANSFERASE REGULATORY CHAIN"/>
    <property type="match status" value="1"/>
</dbReference>
<dbReference type="PANTHER" id="PTHR35805:SF1">
    <property type="entry name" value="ASPARTATE CARBAMOYLTRANSFERASE REGULATORY CHAIN"/>
    <property type="match status" value="1"/>
</dbReference>
<dbReference type="Pfam" id="PF01948">
    <property type="entry name" value="PyrI"/>
    <property type="match status" value="1"/>
</dbReference>
<dbReference type="Pfam" id="PF02748">
    <property type="entry name" value="PyrI_C"/>
    <property type="match status" value="1"/>
</dbReference>
<dbReference type="SUPFAM" id="SSF57825">
    <property type="entry name" value="Aspartate carbamoyltransferase, Regulatory-chain, C-terminal domain"/>
    <property type="match status" value="1"/>
</dbReference>
<dbReference type="SUPFAM" id="SSF54893">
    <property type="entry name" value="Aspartate carbamoyltransferase, Regulatory-chain, N-terminal domain"/>
    <property type="match status" value="1"/>
</dbReference>
<gene>
    <name evidence="1" type="primary">pyrI</name>
    <name type="ordered locus">Spro_0544</name>
</gene>
<feature type="chain" id="PRO_1000057016" description="Aspartate carbamoyltransferase regulatory chain">
    <location>
        <begin position="1"/>
        <end position="154"/>
    </location>
</feature>
<feature type="binding site" evidence="1">
    <location>
        <position position="109"/>
    </location>
    <ligand>
        <name>Zn(2+)</name>
        <dbReference type="ChEBI" id="CHEBI:29105"/>
    </ligand>
</feature>
<feature type="binding site" evidence="1">
    <location>
        <position position="114"/>
    </location>
    <ligand>
        <name>Zn(2+)</name>
        <dbReference type="ChEBI" id="CHEBI:29105"/>
    </ligand>
</feature>
<feature type="binding site" evidence="1">
    <location>
        <position position="138"/>
    </location>
    <ligand>
        <name>Zn(2+)</name>
        <dbReference type="ChEBI" id="CHEBI:29105"/>
    </ligand>
</feature>
<feature type="binding site" evidence="1">
    <location>
        <position position="141"/>
    </location>
    <ligand>
        <name>Zn(2+)</name>
        <dbReference type="ChEBI" id="CHEBI:29105"/>
    </ligand>
</feature>
<organism>
    <name type="scientific">Serratia proteamaculans (strain 568)</name>
    <dbReference type="NCBI Taxonomy" id="399741"/>
    <lineage>
        <taxon>Bacteria</taxon>
        <taxon>Pseudomonadati</taxon>
        <taxon>Pseudomonadota</taxon>
        <taxon>Gammaproteobacteria</taxon>
        <taxon>Enterobacterales</taxon>
        <taxon>Yersiniaceae</taxon>
        <taxon>Serratia</taxon>
    </lineage>
</organism>
<proteinExistence type="inferred from homology"/>
<name>PYRI_SERP5</name>
<sequence length="154" mass="17254">MTHDNKLQVEAIKCGTVIDHIPAQIGFKLLTLFKLTATDQRITIGLNLPSGELGRKDLIKIENTFLTEQQANQLAMYAPKATVNRIDNYEVVRKLTLSLPDHIDGVLTCPNSNCISRSEPVSSSFSVKSRDGDVHLKCRYCEKEFEHQVVLQAD</sequence>
<evidence type="ECO:0000255" key="1">
    <source>
        <dbReference type="HAMAP-Rule" id="MF_00002"/>
    </source>
</evidence>
<protein>
    <recommendedName>
        <fullName evidence="1">Aspartate carbamoyltransferase regulatory chain</fullName>
    </recommendedName>
</protein>
<accession>A8G960</accession>